<feature type="chain" id="PRO_0000144398" description="ATP synthase subunit alpha, mitochondrial">
    <location>
        <begin position="1"/>
        <end position="507"/>
    </location>
</feature>
<feature type="binding site" evidence="1">
    <location>
        <begin position="171"/>
        <end position="178"/>
    </location>
    <ligand>
        <name>ATP</name>
        <dbReference type="ChEBI" id="CHEBI:30616"/>
    </ligand>
</feature>
<feature type="site" description="Required for activity" evidence="1">
    <location>
        <position position="373"/>
    </location>
</feature>
<protein>
    <recommendedName>
        <fullName>ATP synthase subunit alpha, mitochondrial</fullName>
    </recommendedName>
</protein>
<gene>
    <name type="primary">ATPA</name>
</gene>
<organism>
    <name type="scientific">Brassica napus</name>
    <name type="common">Rape</name>
    <dbReference type="NCBI Taxonomy" id="3708"/>
    <lineage>
        <taxon>Eukaryota</taxon>
        <taxon>Viridiplantae</taxon>
        <taxon>Streptophyta</taxon>
        <taxon>Embryophyta</taxon>
        <taxon>Tracheophyta</taxon>
        <taxon>Spermatophyta</taxon>
        <taxon>Magnoliopsida</taxon>
        <taxon>eudicotyledons</taxon>
        <taxon>Gunneridae</taxon>
        <taxon>Pentapetalae</taxon>
        <taxon>rosids</taxon>
        <taxon>malvids</taxon>
        <taxon>Brassicales</taxon>
        <taxon>Brassicaceae</taxon>
        <taxon>Brassiceae</taxon>
        <taxon>Brassica</taxon>
    </lineage>
</organism>
<dbReference type="EMBL" id="X56008">
    <property type="protein sequence ID" value="CAA39483.1"/>
    <property type="molecule type" value="Genomic_DNA"/>
</dbReference>
<dbReference type="EMBL" id="Z12627">
    <property type="protein sequence ID" value="CAA78274.1"/>
    <property type="molecule type" value="Genomic_DNA"/>
</dbReference>
<dbReference type="PIR" id="S13382">
    <property type="entry name" value="PWRPA"/>
</dbReference>
<dbReference type="SMR" id="P22201"/>
<dbReference type="GO" id="GO:0005743">
    <property type="term" value="C:mitochondrial inner membrane"/>
    <property type="evidence" value="ECO:0007669"/>
    <property type="project" value="UniProtKB-SubCell"/>
</dbReference>
<dbReference type="GO" id="GO:0045259">
    <property type="term" value="C:proton-transporting ATP synthase complex"/>
    <property type="evidence" value="ECO:0007669"/>
    <property type="project" value="UniProtKB-KW"/>
</dbReference>
<dbReference type="GO" id="GO:0005524">
    <property type="term" value="F:ATP binding"/>
    <property type="evidence" value="ECO:0007669"/>
    <property type="project" value="UniProtKB-KW"/>
</dbReference>
<dbReference type="GO" id="GO:0046933">
    <property type="term" value="F:proton-transporting ATP synthase activity, rotational mechanism"/>
    <property type="evidence" value="ECO:0007669"/>
    <property type="project" value="InterPro"/>
</dbReference>
<dbReference type="CDD" id="cd18113">
    <property type="entry name" value="ATP-synt_F1_alpha_C"/>
    <property type="match status" value="1"/>
</dbReference>
<dbReference type="CDD" id="cd18116">
    <property type="entry name" value="ATP-synt_F1_alpha_N"/>
    <property type="match status" value="1"/>
</dbReference>
<dbReference type="CDD" id="cd01132">
    <property type="entry name" value="F1-ATPase_alpha_CD"/>
    <property type="match status" value="1"/>
</dbReference>
<dbReference type="FunFam" id="1.20.150.20:FF:000001">
    <property type="entry name" value="ATP synthase subunit alpha"/>
    <property type="match status" value="1"/>
</dbReference>
<dbReference type="FunFam" id="2.40.30.20:FF:000001">
    <property type="entry name" value="ATP synthase subunit alpha"/>
    <property type="match status" value="1"/>
</dbReference>
<dbReference type="FunFam" id="3.40.50.300:FF:002432">
    <property type="entry name" value="ATP synthase subunit alpha, mitochondrial"/>
    <property type="match status" value="1"/>
</dbReference>
<dbReference type="Gene3D" id="2.40.30.20">
    <property type="match status" value="1"/>
</dbReference>
<dbReference type="Gene3D" id="1.20.150.20">
    <property type="entry name" value="ATP synthase alpha/beta chain, C-terminal domain"/>
    <property type="match status" value="1"/>
</dbReference>
<dbReference type="Gene3D" id="3.40.50.300">
    <property type="entry name" value="P-loop containing nucleotide triphosphate hydrolases"/>
    <property type="match status" value="1"/>
</dbReference>
<dbReference type="HAMAP" id="MF_01346">
    <property type="entry name" value="ATP_synth_alpha_bact"/>
    <property type="match status" value="1"/>
</dbReference>
<dbReference type="InterPro" id="IPR023366">
    <property type="entry name" value="ATP_synth_asu-like_sf"/>
</dbReference>
<dbReference type="InterPro" id="IPR000793">
    <property type="entry name" value="ATP_synth_asu_C"/>
</dbReference>
<dbReference type="InterPro" id="IPR038376">
    <property type="entry name" value="ATP_synth_asu_C_sf"/>
</dbReference>
<dbReference type="InterPro" id="IPR033732">
    <property type="entry name" value="ATP_synth_F1_a_nt-bd_dom"/>
</dbReference>
<dbReference type="InterPro" id="IPR005294">
    <property type="entry name" value="ATP_synth_F1_asu"/>
</dbReference>
<dbReference type="InterPro" id="IPR020003">
    <property type="entry name" value="ATPase_a/bsu_AS"/>
</dbReference>
<dbReference type="InterPro" id="IPR004100">
    <property type="entry name" value="ATPase_F1/V1/A1_a/bsu_N"/>
</dbReference>
<dbReference type="InterPro" id="IPR036121">
    <property type="entry name" value="ATPase_F1/V1/A1_a/bsu_N_sf"/>
</dbReference>
<dbReference type="InterPro" id="IPR000194">
    <property type="entry name" value="ATPase_F1/V1/A1_a/bsu_nucl-bd"/>
</dbReference>
<dbReference type="InterPro" id="IPR027417">
    <property type="entry name" value="P-loop_NTPase"/>
</dbReference>
<dbReference type="NCBIfam" id="TIGR00962">
    <property type="entry name" value="atpA"/>
    <property type="match status" value="1"/>
</dbReference>
<dbReference type="NCBIfam" id="NF009884">
    <property type="entry name" value="PRK13343.1"/>
    <property type="match status" value="1"/>
</dbReference>
<dbReference type="PANTHER" id="PTHR48082">
    <property type="entry name" value="ATP SYNTHASE SUBUNIT ALPHA, MITOCHONDRIAL"/>
    <property type="match status" value="1"/>
</dbReference>
<dbReference type="PANTHER" id="PTHR48082:SF2">
    <property type="entry name" value="ATP SYNTHASE SUBUNIT ALPHA, MITOCHONDRIAL"/>
    <property type="match status" value="1"/>
</dbReference>
<dbReference type="Pfam" id="PF00006">
    <property type="entry name" value="ATP-synt_ab"/>
    <property type="match status" value="1"/>
</dbReference>
<dbReference type="Pfam" id="PF00306">
    <property type="entry name" value="ATP-synt_ab_C"/>
    <property type="match status" value="1"/>
</dbReference>
<dbReference type="Pfam" id="PF02874">
    <property type="entry name" value="ATP-synt_ab_N"/>
    <property type="match status" value="1"/>
</dbReference>
<dbReference type="PIRSF" id="PIRSF039088">
    <property type="entry name" value="F_ATPase_subunit_alpha"/>
    <property type="match status" value="1"/>
</dbReference>
<dbReference type="SUPFAM" id="SSF47917">
    <property type="entry name" value="C-terminal domain of alpha and beta subunits of F1 ATP synthase"/>
    <property type="match status" value="1"/>
</dbReference>
<dbReference type="SUPFAM" id="SSF50615">
    <property type="entry name" value="N-terminal domain of alpha and beta subunits of F1 ATP synthase"/>
    <property type="match status" value="1"/>
</dbReference>
<dbReference type="SUPFAM" id="SSF52540">
    <property type="entry name" value="P-loop containing nucleoside triphosphate hydrolases"/>
    <property type="match status" value="1"/>
</dbReference>
<dbReference type="PROSITE" id="PS00152">
    <property type="entry name" value="ATPASE_ALPHA_BETA"/>
    <property type="match status" value="1"/>
</dbReference>
<sequence length="507" mass="55142">MELSPRAAELTNLFESRIRNFYANFQVDEIGRVVSVGDGIAQVYGLNEIQAGEMVLFANGVKGMALNLENENVGIVVFGGDTAIKEGDLVKRTGSIVDVPAGKAMLGRVVDAMGVPIDGRGALSDHEQRRVEVKAPGILERKSVHEPMQTGLKAVDSLVPIGRGQRELLIGDRQTGKTTIAIDTILNQKQINSRATSESETMYCVYVAIGQKRSTVGQLIQTLEEANALEYSILVAATASDPAPLQFLAPYSGCAMGEYFRDNGMHALIIYDDLSKQAVAYRQMSLLLRRPPGREAFPGDVFYLHSRLLERAAKRSDQTGAGSLTALPVIETQAGDVSAYIPTNVISITDGQICLETELFYRGIRPAINVGLSVSRVGSAAQLKAMKQVCGSSKLELAQYREVAAFAQFGSDLDAATQALLNRGARLTEVPKQPQYAPLPIEKQILVIYAAVNGFCDRMPLDRISQYEKAIPNSVKPELLQALKGGLTNERKMEPDAFLKERALRLI</sequence>
<evidence type="ECO:0000250" key="1"/>
<evidence type="ECO:0000305" key="2"/>
<comment type="function">
    <text evidence="1">Mitochondrial membrane ATP synthase (F(1)F(0) ATP synthase or Complex V) produces ATP from ADP in the presence of a proton gradient across the membrane which is generated by electron transport complexes of the respiratory chain. F-type ATPases consist of two structural domains, F(1) - containing the extramembraneous catalytic core, and F(0) - containing the membrane proton channel, linked together by a central stalk and a peripheral stalk. During catalysis, ATP synthesis in the catalytic domain of F(1) is coupled via a rotary mechanism of the central stalk subunits to proton translocation. Subunits alpha and beta form the catalytic core in F(1). Rotation of the central stalk against the surrounding alpha(3)beta(3) subunits leads to hydrolysis of ATP in three separate catalytic sites on the beta subunits. Subunit alpha does not bear the catalytic high-affinity ATP-binding sites (By similarity).</text>
</comment>
<comment type="subunit">
    <text>F-type ATPases have 2 components, CF(1) - the catalytic core - and CF(0) - the membrane proton channel. CF(1) has five subunits: alpha(3), beta(3), gamma(1), delta(1), epsilon(1). CF(0) has three main subunits: a, b and c.</text>
</comment>
<comment type="subcellular location">
    <subcellularLocation>
        <location>Mitochondrion</location>
    </subcellularLocation>
    <subcellularLocation>
        <location>Mitochondrion inner membrane</location>
    </subcellularLocation>
    <text>Peripheral membrane protein.</text>
</comment>
<comment type="similarity">
    <text evidence="2">Belongs to the ATPase alpha/beta chains family.</text>
</comment>
<keyword id="KW-0066">ATP synthesis</keyword>
<keyword id="KW-0067">ATP-binding</keyword>
<keyword id="KW-0139">CF(1)</keyword>
<keyword id="KW-0375">Hydrogen ion transport</keyword>
<keyword id="KW-0406">Ion transport</keyword>
<keyword id="KW-0472">Membrane</keyword>
<keyword id="KW-0496">Mitochondrion</keyword>
<keyword id="KW-0999">Mitochondrion inner membrane</keyword>
<keyword id="KW-0547">Nucleotide-binding</keyword>
<keyword id="KW-0813">Transport</keyword>
<geneLocation type="mitochondrion"/>
<accession>P22201</accession>
<reference key="1">
    <citation type="journal article" date="1991" name="Plant Mol. Biol.">
        <title>Nucleotide sequence and transcription analyses of the rapeseed (Brassica napus L.) mitochondrial F1-ATPase alpha-subunit gene.</title>
        <authorList>
            <person name="Handa H."/>
            <person name="Nakajima K."/>
        </authorList>
    </citation>
    <scope>NUCLEOTIDE SEQUENCE [GENOMIC DNA]</scope>
    <source>
        <strain>cv. Polima</strain>
    </source>
</reference>
<reference key="2">
    <citation type="journal article" date="1992" name="Mol. Gen. Genet.">
        <title>Sequence and transcript analysis of the Nco2.5 Ogura-specific fragment correlated with cytoplasmic male sterility in Brassica cybrids.</title>
        <authorList>
            <person name="Bonhomme S."/>
            <person name="Budar F."/>
            <person name="Lancelin D."/>
            <person name="Small I."/>
            <person name="Defrance M.-C."/>
            <person name="Pelletier G."/>
        </authorList>
    </citation>
    <scope>NUCLEOTIDE SEQUENCE [GENOMIC DNA] OF 1-111</scope>
</reference>
<name>ATPAM_BRANA</name>
<proteinExistence type="inferred from homology"/>